<organism>
    <name type="scientific">Aspergillus terreus (strain NIH 2624 / FGSC A1156)</name>
    <dbReference type="NCBI Taxonomy" id="341663"/>
    <lineage>
        <taxon>Eukaryota</taxon>
        <taxon>Fungi</taxon>
        <taxon>Dikarya</taxon>
        <taxon>Ascomycota</taxon>
        <taxon>Pezizomycotina</taxon>
        <taxon>Eurotiomycetes</taxon>
        <taxon>Eurotiomycetidae</taxon>
        <taxon>Eurotiales</taxon>
        <taxon>Aspergillaceae</taxon>
        <taxon>Aspergillus</taxon>
        <taxon>Aspergillus subgen. Circumdati</taxon>
    </lineage>
</organism>
<sequence length="749" mass="82178">MDAFKLLTRSTNLKTGRAAATSAAQTSRLPSTGKAANPQLFHNSEADRLLEEKKKHGQKRKRGHGADDAGSEDEDAADLDFFSSAKRASTGGAVAGKRHQEQASADKDGDSGSEDGSEMDEVQRRTVLNAHKIKVTDLRDLDQIQSTNAQTLQTEEPKKKKKKKAKAQQEEPKTLTKKEQKKARRLFPQPLVSFKELRTKYKISRRLAENIAEQGFTVPTEVQLGTLPLQLGDSSVQQASKPGETVEPDLLVVAPTGSGKTLSFLIPVINKIVRHHHEQPDERGIFAVVVAPTKELASQIVNEGRKLVQGTGVKITLMKKGMQVVERDGDGDSDEKDVLDEDSADSGSDSEDDEQTTDKKTKGKAPVTKSDILVTTPLLLVNALSANRTKPLAALPLVRNIVLDEADVLLDPLFREQTLDIWRSCTHPELRASLWSATMGSNVEDLAKSTIQERKDLSGTTKSYPLIRLVVGLKDSAIPNIQHKLVYAATEQGKLLGLRQLLHPTARTATDVHLRPPFLIFTQTIPRAVALHSELLYDIPPEAGGSSRIAVLHSELSDSQRSEIMKGFRKGEIWILVTTDLLARGVDFRGINGVVNYDIPNSAAVYVHRVGRTGRAGREGGVAVTYYTKEDIPYVKSIANIIDVSEKLRGAGGEKSVQKWLLDSLPDLSKKDKKELKKHGVKARQSNLKSIKDNKEFRQAKISTKSGYERRMENKKKGAIAASRNRKSQPQAPSTGADSGDDSWSGLED</sequence>
<gene>
    <name type="primary">rok1</name>
    <name type="ORF">ATEG_05174</name>
</gene>
<proteinExistence type="inferred from homology"/>
<evidence type="ECO:0000250" key="1"/>
<evidence type="ECO:0000255" key="2">
    <source>
        <dbReference type="PROSITE-ProRule" id="PRU00541"/>
    </source>
</evidence>
<evidence type="ECO:0000255" key="3">
    <source>
        <dbReference type="PROSITE-ProRule" id="PRU00542"/>
    </source>
</evidence>
<evidence type="ECO:0000256" key="4">
    <source>
        <dbReference type="SAM" id="MobiDB-lite"/>
    </source>
</evidence>
<evidence type="ECO:0000305" key="5"/>
<keyword id="KW-0067">ATP-binding</keyword>
<keyword id="KW-0347">Helicase</keyword>
<keyword id="KW-0378">Hydrolase</keyword>
<keyword id="KW-0547">Nucleotide-binding</keyword>
<keyword id="KW-0539">Nucleus</keyword>
<keyword id="KW-1185">Reference proteome</keyword>
<keyword id="KW-0690">Ribosome biogenesis</keyword>
<keyword id="KW-0694">RNA-binding</keyword>
<keyword id="KW-0698">rRNA processing</keyword>
<accession>Q0CMB0</accession>
<comment type="function">
    <text>ATP-dependent RNA helicase involved in 40S ribosomal subunit biogenesis. Required for the processing and cleavage of 35S pre-rRNA at sites A0, A1, and A2, leading to mature 18S rRNA.</text>
</comment>
<comment type="catalytic activity">
    <reaction>
        <text>ATP + H2O = ADP + phosphate + H(+)</text>
        <dbReference type="Rhea" id="RHEA:13065"/>
        <dbReference type="ChEBI" id="CHEBI:15377"/>
        <dbReference type="ChEBI" id="CHEBI:15378"/>
        <dbReference type="ChEBI" id="CHEBI:30616"/>
        <dbReference type="ChEBI" id="CHEBI:43474"/>
        <dbReference type="ChEBI" id="CHEBI:456216"/>
        <dbReference type="EC" id="3.6.4.13"/>
    </reaction>
</comment>
<comment type="subunit">
    <text evidence="1">Interacts with the U3 snoRNA and is associated with the 90S and 40S pre-ribosomes.</text>
</comment>
<comment type="subcellular location">
    <subcellularLocation>
        <location evidence="1">Nucleus</location>
        <location evidence="1">Nucleolus</location>
    </subcellularLocation>
</comment>
<comment type="domain">
    <text>The Q motif is unique to and characteristic of the DEAD box family of RNA helicases and controls ATP binding and hydrolysis.</text>
</comment>
<comment type="similarity">
    <text evidence="5">Belongs to the DEAD box helicase family. DDX52/ROK1 subfamily.</text>
</comment>
<comment type="sequence caution" evidence="5">
    <conflict type="erroneous gene model prediction">
        <sequence resource="EMBL-CDS" id="EAU34243"/>
    </conflict>
</comment>
<dbReference type="EC" id="3.6.4.13"/>
<dbReference type="EMBL" id="CH476600">
    <property type="protein sequence ID" value="EAU34243.1"/>
    <property type="status" value="ALT_SEQ"/>
    <property type="molecule type" value="Genomic_DNA"/>
</dbReference>
<dbReference type="RefSeq" id="XP_001214352.1">
    <property type="nucleotide sequence ID" value="XM_001214352.1"/>
</dbReference>
<dbReference type="SMR" id="Q0CMB0"/>
<dbReference type="STRING" id="341663.Q0CMB0"/>
<dbReference type="GeneID" id="4320809"/>
<dbReference type="eggNOG" id="KOG0344">
    <property type="taxonomic scope" value="Eukaryota"/>
</dbReference>
<dbReference type="OrthoDB" id="360161at2759"/>
<dbReference type="Proteomes" id="UP000007963">
    <property type="component" value="Unassembled WGS sequence"/>
</dbReference>
<dbReference type="GO" id="GO:0005829">
    <property type="term" value="C:cytosol"/>
    <property type="evidence" value="ECO:0007669"/>
    <property type="project" value="TreeGrafter"/>
</dbReference>
<dbReference type="GO" id="GO:0005730">
    <property type="term" value="C:nucleolus"/>
    <property type="evidence" value="ECO:0007669"/>
    <property type="project" value="UniProtKB-SubCell"/>
</dbReference>
<dbReference type="GO" id="GO:0005524">
    <property type="term" value="F:ATP binding"/>
    <property type="evidence" value="ECO:0007669"/>
    <property type="project" value="UniProtKB-KW"/>
</dbReference>
<dbReference type="GO" id="GO:0016887">
    <property type="term" value="F:ATP hydrolysis activity"/>
    <property type="evidence" value="ECO:0007669"/>
    <property type="project" value="RHEA"/>
</dbReference>
<dbReference type="GO" id="GO:0003723">
    <property type="term" value="F:RNA binding"/>
    <property type="evidence" value="ECO:0007669"/>
    <property type="project" value="UniProtKB-KW"/>
</dbReference>
<dbReference type="GO" id="GO:0003724">
    <property type="term" value="F:RNA helicase activity"/>
    <property type="evidence" value="ECO:0007669"/>
    <property type="project" value="UniProtKB-EC"/>
</dbReference>
<dbReference type="GO" id="GO:0030490">
    <property type="term" value="P:maturation of SSU-rRNA"/>
    <property type="evidence" value="ECO:0007669"/>
    <property type="project" value="InterPro"/>
</dbReference>
<dbReference type="CDD" id="cd17957">
    <property type="entry name" value="DEADc_DDX52"/>
    <property type="match status" value="1"/>
</dbReference>
<dbReference type="CDD" id="cd18787">
    <property type="entry name" value="SF2_C_DEAD"/>
    <property type="match status" value="1"/>
</dbReference>
<dbReference type="Gene3D" id="3.40.50.300">
    <property type="entry name" value="P-loop containing nucleotide triphosphate hydrolases"/>
    <property type="match status" value="2"/>
</dbReference>
<dbReference type="InterPro" id="IPR044764">
    <property type="entry name" value="DDX52/Rok1_DEADc"/>
</dbReference>
<dbReference type="InterPro" id="IPR011545">
    <property type="entry name" value="DEAD/DEAH_box_helicase_dom"/>
</dbReference>
<dbReference type="InterPro" id="IPR050079">
    <property type="entry name" value="DEAD_box_RNA_helicase"/>
</dbReference>
<dbReference type="InterPro" id="IPR014001">
    <property type="entry name" value="Helicase_ATP-bd"/>
</dbReference>
<dbReference type="InterPro" id="IPR001650">
    <property type="entry name" value="Helicase_C-like"/>
</dbReference>
<dbReference type="InterPro" id="IPR027417">
    <property type="entry name" value="P-loop_NTPase"/>
</dbReference>
<dbReference type="PANTHER" id="PTHR47959">
    <property type="entry name" value="ATP-DEPENDENT RNA HELICASE RHLE-RELATED"/>
    <property type="match status" value="1"/>
</dbReference>
<dbReference type="PANTHER" id="PTHR47959:SF15">
    <property type="entry name" value="RNA HELICASE"/>
    <property type="match status" value="1"/>
</dbReference>
<dbReference type="Pfam" id="PF00270">
    <property type="entry name" value="DEAD"/>
    <property type="match status" value="1"/>
</dbReference>
<dbReference type="Pfam" id="PF00271">
    <property type="entry name" value="Helicase_C"/>
    <property type="match status" value="1"/>
</dbReference>
<dbReference type="SMART" id="SM00487">
    <property type="entry name" value="DEXDc"/>
    <property type="match status" value="1"/>
</dbReference>
<dbReference type="SMART" id="SM00490">
    <property type="entry name" value="HELICc"/>
    <property type="match status" value="1"/>
</dbReference>
<dbReference type="SUPFAM" id="SSF52540">
    <property type="entry name" value="P-loop containing nucleoside triphosphate hydrolases"/>
    <property type="match status" value="1"/>
</dbReference>
<dbReference type="PROSITE" id="PS51192">
    <property type="entry name" value="HELICASE_ATP_BIND_1"/>
    <property type="match status" value="1"/>
</dbReference>
<dbReference type="PROSITE" id="PS51194">
    <property type="entry name" value="HELICASE_CTER"/>
    <property type="match status" value="1"/>
</dbReference>
<dbReference type="PROSITE" id="PS51195">
    <property type="entry name" value="Q_MOTIF"/>
    <property type="match status" value="1"/>
</dbReference>
<name>ROK1_ASPTN</name>
<protein>
    <recommendedName>
        <fullName>ATP-dependent RNA helicase rok1</fullName>
        <ecNumber>3.6.4.13</ecNumber>
    </recommendedName>
</protein>
<reference key="1">
    <citation type="submission" date="2005-09" db="EMBL/GenBank/DDBJ databases">
        <title>Annotation of the Aspergillus terreus NIH2624 genome.</title>
        <authorList>
            <person name="Birren B.W."/>
            <person name="Lander E.S."/>
            <person name="Galagan J.E."/>
            <person name="Nusbaum C."/>
            <person name="Devon K."/>
            <person name="Henn M."/>
            <person name="Ma L.-J."/>
            <person name="Jaffe D.B."/>
            <person name="Butler J."/>
            <person name="Alvarez P."/>
            <person name="Gnerre S."/>
            <person name="Grabherr M."/>
            <person name="Kleber M."/>
            <person name="Mauceli E.W."/>
            <person name="Brockman W."/>
            <person name="Rounsley S."/>
            <person name="Young S.K."/>
            <person name="LaButti K."/>
            <person name="Pushparaj V."/>
            <person name="DeCaprio D."/>
            <person name="Crawford M."/>
            <person name="Koehrsen M."/>
            <person name="Engels R."/>
            <person name="Montgomery P."/>
            <person name="Pearson M."/>
            <person name="Howarth C."/>
            <person name="Larson L."/>
            <person name="Luoma S."/>
            <person name="White J."/>
            <person name="Alvarado L."/>
            <person name="Kodira C.D."/>
            <person name="Zeng Q."/>
            <person name="Oleary S."/>
            <person name="Yandava C."/>
            <person name="Denning D.W."/>
            <person name="Nierman W.C."/>
            <person name="Milne T."/>
            <person name="Madden K."/>
        </authorList>
    </citation>
    <scope>NUCLEOTIDE SEQUENCE [LARGE SCALE GENOMIC DNA]</scope>
    <source>
        <strain>NIH 2624 / FGSC A1156</strain>
    </source>
</reference>
<feature type="chain" id="PRO_0000282701" description="ATP-dependent RNA helicase rok1">
    <location>
        <begin position="1"/>
        <end position="749"/>
    </location>
</feature>
<feature type="domain" description="Helicase ATP-binding" evidence="2">
    <location>
        <begin position="241"/>
        <end position="457"/>
    </location>
</feature>
<feature type="domain" description="Helicase C-terminal" evidence="3">
    <location>
        <begin position="497"/>
        <end position="665"/>
    </location>
</feature>
<feature type="region of interest" description="Disordered" evidence="4">
    <location>
        <begin position="1"/>
        <end position="121"/>
    </location>
</feature>
<feature type="region of interest" description="Disordered" evidence="4">
    <location>
        <begin position="148"/>
        <end position="182"/>
    </location>
</feature>
<feature type="region of interest" description="Disordered" evidence="4">
    <location>
        <begin position="324"/>
        <end position="366"/>
    </location>
</feature>
<feature type="region of interest" description="Disordered" evidence="4">
    <location>
        <begin position="672"/>
        <end position="749"/>
    </location>
</feature>
<feature type="short sequence motif" description="Q motif">
    <location>
        <begin position="192"/>
        <end position="224"/>
    </location>
</feature>
<feature type="short sequence motif" description="DEAD box">
    <location>
        <begin position="404"/>
        <end position="407"/>
    </location>
</feature>
<feature type="compositionally biased region" description="Low complexity" evidence="4">
    <location>
        <begin position="17"/>
        <end position="28"/>
    </location>
</feature>
<feature type="compositionally biased region" description="Basic and acidic residues" evidence="4">
    <location>
        <begin position="44"/>
        <end position="54"/>
    </location>
</feature>
<feature type="compositionally biased region" description="Acidic residues" evidence="4">
    <location>
        <begin position="69"/>
        <end position="78"/>
    </location>
</feature>
<feature type="compositionally biased region" description="Basic and acidic residues" evidence="4">
    <location>
        <begin position="98"/>
        <end position="110"/>
    </location>
</feature>
<feature type="compositionally biased region" description="Acidic residues" evidence="4">
    <location>
        <begin position="111"/>
        <end position="120"/>
    </location>
</feature>
<feature type="compositionally biased region" description="Basic and acidic residues" evidence="4">
    <location>
        <begin position="167"/>
        <end position="178"/>
    </location>
</feature>
<feature type="compositionally biased region" description="Acidic residues" evidence="4">
    <location>
        <begin position="331"/>
        <end position="355"/>
    </location>
</feature>
<feature type="compositionally biased region" description="Basic and acidic residues" evidence="4">
    <location>
        <begin position="690"/>
        <end position="699"/>
    </location>
</feature>
<feature type="compositionally biased region" description="Basic and acidic residues" evidence="4">
    <location>
        <begin position="707"/>
        <end position="716"/>
    </location>
</feature>
<feature type="compositionally biased region" description="Polar residues" evidence="4">
    <location>
        <begin position="728"/>
        <end position="737"/>
    </location>
</feature>
<feature type="binding site" evidence="2">
    <location>
        <begin position="254"/>
        <end position="261"/>
    </location>
    <ligand>
        <name>ATP</name>
        <dbReference type="ChEBI" id="CHEBI:30616"/>
    </ligand>
</feature>